<comment type="function">
    <text>Phosphorylase b kinase catalyzes the phosphorylation of serine in certain substrates, including troponin I. The alpha chain may bind calmodulin.</text>
</comment>
<comment type="activity regulation">
    <text evidence="1">By phosphorylation of various serine residues and by calcium.</text>
</comment>
<comment type="pathway">
    <text>Glycan biosynthesis; glycogen metabolism.</text>
</comment>
<comment type="subunit">
    <text evidence="1">Hexadecamer of 4 heterotetramers, each composed of alpha, beta, gamma, and delta subunits. Alpha (PHKA1 or PHKA2) and beta (PHKB) are regulatory subunits, gamma (PHKG1 or PHKG2) is the catalytic subunit, and delta is calmodulin (By similarity).</text>
</comment>
<comment type="subcellular location">
    <subcellularLocation>
        <location evidence="6">Cell membrane</location>
        <topology evidence="6">Lipid-anchor</topology>
        <orientation evidence="6">Cytoplasmic side</orientation>
    </subcellularLocation>
</comment>
<comment type="PTM">
    <text evidence="2">Although the final Cys may be farnesylated, the terminal tripeptide is probably not removed, and the C-terminus is not methylated.</text>
</comment>
<comment type="similarity">
    <text evidence="6">Belongs to the phosphorylase b kinase regulatory chain family.</text>
</comment>
<comment type="sequence caution" evidence="6">
    <conflict type="erroneous initiation">
        <sequence resource="EMBL-CDS" id="AAH50040"/>
    </conflict>
</comment>
<accession>Q8BWJ3</accession>
<accession>Q3TN65</accession>
<accession>Q810J6</accession>
<dbReference type="EMBL" id="AK052346">
    <property type="protein sequence ID" value="BAC34948.1"/>
    <property type="molecule type" value="mRNA"/>
</dbReference>
<dbReference type="EMBL" id="AK165506">
    <property type="protein sequence ID" value="BAE38224.1"/>
    <property type="molecule type" value="mRNA"/>
</dbReference>
<dbReference type="EMBL" id="BC050040">
    <property type="protein sequence ID" value="AAH50040.1"/>
    <property type="status" value="ALT_INIT"/>
    <property type="molecule type" value="mRNA"/>
</dbReference>
<dbReference type="CCDS" id="CCDS30504.1"/>
<dbReference type="RefSeq" id="NP_001171350.1">
    <property type="nucleotide sequence ID" value="NM_001177879.2"/>
</dbReference>
<dbReference type="RefSeq" id="NP_766371.1">
    <property type="nucleotide sequence ID" value="NM_172783.4"/>
</dbReference>
<dbReference type="RefSeq" id="XP_006528742.1">
    <property type="nucleotide sequence ID" value="XM_006528679.3"/>
</dbReference>
<dbReference type="SMR" id="Q8BWJ3"/>
<dbReference type="BioGRID" id="225291">
    <property type="interactions" value="2"/>
</dbReference>
<dbReference type="FunCoup" id="Q8BWJ3">
    <property type="interactions" value="549"/>
</dbReference>
<dbReference type="STRING" id="10090.ENSMUSP00000033652"/>
<dbReference type="iPTMnet" id="Q8BWJ3"/>
<dbReference type="PhosphoSitePlus" id="Q8BWJ3"/>
<dbReference type="jPOST" id="Q8BWJ3"/>
<dbReference type="PaxDb" id="10090-ENSMUSP00000033652"/>
<dbReference type="ProteomicsDB" id="265017"/>
<dbReference type="Pumba" id="Q8BWJ3"/>
<dbReference type="Antibodypedia" id="24169">
    <property type="antibodies" value="97 antibodies from 25 providers"/>
</dbReference>
<dbReference type="DNASU" id="110094"/>
<dbReference type="Ensembl" id="ENSMUST00000033652.9">
    <property type="protein sequence ID" value="ENSMUSP00000033652.3"/>
    <property type="gene ID" value="ENSMUSG00000031295.14"/>
</dbReference>
<dbReference type="Ensembl" id="ENSMUST00000112377.8">
    <property type="protein sequence ID" value="ENSMUSP00000107996.2"/>
    <property type="gene ID" value="ENSMUSG00000031295.14"/>
</dbReference>
<dbReference type="GeneID" id="110094"/>
<dbReference type="KEGG" id="mmu:110094"/>
<dbReference type="UCSC" id="uc009utk.1">
    <property type="organism name" value="mouse"/>
</dbReference>
<dbReference type="AGR" id="MGI:97577"/>
<dbReference type="CTD" id="5256"/>
<dbReference type="MGI" id="MGI:97577">
    <property type="gene designation" value="Phka2"/>
</dbReference>
<dbReference type="VEuPathDB" id="HostDB:ENSMUSG00000031295"/>
<dbReference type="eggNOG" id="KOG3635">
    <property type="taxonomic scope" value="Eukaryota"/>
</dbReference>
<dbReference type="GeneTree" id="ENSGT00950000183118"/>
<dbReference type="HOGENOM" id="CLU_004177_1_0_1"/>
<dbReference type="InParanoid" id="Q8BWJ3"/>
<dbReference type="OMA" id="QFEHIEC"/>
<dbReference type="OrthoDB" id="5971574at2759"/>
<dbReference type="PhylomeDB" id="Q8BWJ3"/>
<dbReference type="TreeFam" id="TF313970"/>
<dbReference type="Reactome" id="R-MMU-70221">
    <property type="pathway name" value="Glycogen breakdown (glycogenolysis)"/>
</dbReference>
<dbReference type="UniPathway" id="UPA00163"/>
<dbReference type="BioGRID-ORCS" id="110094">
    <property type="hits" value="4 hits in 77 CRISPR screens"/>
</dbReference>
<dbReference type="ChiTaRS" id="Phka2">
    <property type="organism name" value="mouse"/>
</dbReference>
<dbReference type="PRO" id="PR:Q8BWJ3"/>
<dbReference type="Proteomes" id="UP000000589">
    <property type="component" value="Chromosome X"/>
</dbReference>
<dbReference type="RNAct" id="Q8BWJ3">
    <property type="molecule type" value="protein"/>
</dbReference>
<dbReference type="Bgee" id="ENSMUSG00000031295">
    <property type="expression patterns" value="Expressed in brown adipose tissue and 255 other cell types or tissues"/>
</dbReference>
<dbReference type="ExpressionAtlas" id="Q8BWJ3">
    <property type="expression patterns" value="baseline and differential"/>
</dbReference>
<dbReference type="GO" id="GO:0005964">
    <property type="term" value="C:phosphorylase kinase complex"/>
    <property type="evidence" value="ECO:0007669"/>
    <property type="project" value="Ensembl"/>
</dbReference>
<dbReference type="GO" id="GO:0005886">
    <property type="term" value="C:plasma membrane"/>
    <property type="evidence" value="ECO:0007669"/>
    <property type="project" value="UniProtKB-SubCell"/>
</dbReference>
<dbReference type="GO" id="GO:0005516">
    <property type="term" value="F:calmodulin binding"/>
    <property type="evidence" value="ECO:0007669"/>
    <property type="project" value="UniProtKB-KW"/>
</dbReference>
<dbReference type="GO" id="GO:0005977">
    <property type="term" value="P:glycogen metabolic process"/>
    <property type="evidence" value="ECO:0007669"/>
    <property type="project" value="UniProtKB-UniPathway"/>
</dbReference>
<dbReference type="FunFam" id="1.50.10.10:FF:000004">
    <property type="entry name" value="Phosphorylase b kinase regulatory subunit"/>
    <property type="match status" value="1"/>
</dbReference>
<dbReference type="Gene3D" id="1.50.10.10">
    <property type="match status" value="1"/>
</dbReference>
<dbReference type="InterPro" id="IPR008928">
    <property type="entry name" value="6-hairpin_glycosidase_sf"/>
</dbReference>
<dbReference type="InterPro" id="IPR012341">
    <property type="entry name" value="6hp_glycosidase-like_sf"/>
</dbReference>
<dbReference type="InterPro" id="IPR011613">
    <property type="entry name" value="GH15-like"/>
</dbReference>
<dbReference type="InterPro" id="IPR045583">
    <property type="entry name" value="KPBA/B_C"/>
</dbReference>
<dbReference type="InterPro" id="IPR008734">
    <property type="entry name" value="PHK_A/B_su"/>
</dbReference>
<dbReference type="PANTHER" id="PTHR10749">
    <property type="entry name" value="PHOSPHORYLASE B KINASE REGULATORY SUBUNIT"/>
    <property type="match status" value="1"/>
</dbReference>
<dbReference type="PANTHER" id="PTHR10749:SF5">
    <property type="entry name" value="PHOSPHORYLASE B KINASE REGULATORY SUBUNIT ALPHA, LIVER ISOFORM"/>
    <property type="match status" value="1"/>
</dbReference>
<dbReference type="Pfam" id="PF00723">
    <property type="entry name" value="Glyco_hydro_15"/>
    <property type="match status" value="1"/>
</dbReference>
<dbReference type="Pfam" id="PF19292">
    <property type="entry name" value="KPBB_C"/>
    <property type="match status" value="1"/>
</dbReference>
<dbReference type="SUPFAM" id="SSF48208">
    <property type="entry name" value="Six-hairpin glycosidases"/>
    <property type="match status" value="1"/>
</dbReference>
<name>KPB2_MOUSE</name>
<evidence type="ECO:0000250" key="1"/>
<evidence type="ECO:0000250" key="2">
    <source>
        <dbReference type="UniProtKB" id="P18688"/>
    </source>
</evidence>
<evidence type="ECO:0000250" key="3">
    <source>
        <dbReference type="UniProtKB" id="P46019"/>
    </source>
</evidence>
<evidence type="ECO:0000255" key="4"/>
<evidence type="ECO:0000256" key="5">
    <source>
        <dbReference type="SAM" id="MobiDB-lite"/>
    </source>
</evidence>
<evidence type="ECO:0000305" key="6"/>
<evidence type="ECO:0007744" key="7">
    <source>
    </source>
</evidence>
<evidence type="ECO:0007744" key="8">
    <source>
    </source>
</evidence>
<gene>
    <name type="primary">Phka2</name>
</gene>
<protein>
    <recommendedName>
        <fullName>Phosphorylase b kinase regulatory subunit alpha, liver isoform</fullName>
        <shortName>Phosphorylase kinase alpha L subunit</shortName>
    </recommendedName>
</protein>
<organism>
    <name type="scientific">Mus musculus</name>
    <name type="common">Mouse</name>
    <dbReference type="NCBI Taxonomy" id="10090"/>
    <lineage>
        <taxon>Eukaryota</taxon>
        <taxon>Metazoa</taxon>
        <taxon>Chordata</taxon>
        <taxon>Craniata</taxon>
        <taxon>Vertebrata</taxon>
        <taxon>Euteleostomi</taxon>
        <taxon>Mammalia</taxon>
        <taxon>Eutheria</taxon>
        <taxon>Euarchontoglires</taxon>
        <taxon>Glires</taxon>
        <taxon>Rodentia</taxon>
        <taxon>Myomorpha</taxon>
        <taxon>Muroidea</taxon>
        <taxon>Muridae</taxon>
        <taxon>Murinae</taxon>
        <taxon>Mus</taxon>
        <taxon>Mus</taxon>
    </lineage>
</organism>
<proteinExistence type="evidence at protein level"/>
<keyword id="KW-0112">Calmodulin-binding</keyword>
<keyword id="KW-0119">Carbohydrate metabolism</keyword>
<keyword id="KW-1003">Cell membrane</keyword>
<keyword id="KW-0321">Glycogen metabolism</keyword>
<keyword id="KW-0449">Lipoprotein</keyword>
<keyword id="KW-0472">Membrane</keyword>
<keyword id="KW-0597">Phosphoprotein</keyword>
<keyword id="KW-0636">Prenylation</keyword>
<keyword id="KW-1185">Reference proteome</keyword>
<reference key="1">
    <citation type="journal article" date="2005" name="Science">
        <title>The transcriptional landscape of the mammalian genome.</title>
        <authorList>
            <person name="Carninci P."/>
            <person name="Kasukawa T."/>
            <person name="Katayama S."/>
            <person name="Gough J."/>
            <person name="Frith M.C."/>
            <person name="Maeda N."/>
            <person name="Oyama R."/>
            <person name="Ravasi T."/>
            <person name="Lenhard B."/>
            <person name="Wells C."/>
            <person name="Kodzius R."/>
            <person name="Shimokawa K."/>
            <person name="Bajic V.B."/>
            <person name="Brenner S.E."/>
            <person name="Batalov S."/>
            <person name="Forrest A.R."/>
            <person name="Zavolan M."/>
            <person name="Davis M.J."/>
            <person name="Wilming L.G."/>
            <person name="Aidinis V."/>
            <person name="Allen J.E."/>
            <person name="Ambesi-Impiombato A."/>
            <person name="Apweiler R."/>
            <person name="Aturaliya R.N."/>
            <person name="Bailey T.L."/>
            <person name="Bansal M."/>
            <person name="Baxter L."/>
            <person name="Beisel K.W."/>
            <person name="Bersano T."/>
            <person name="Bono H."/>
            <person name="Chalk A.M."/>
            <person name="Chiu K.P."/>
            <person name="Choudhary V."/>
            <person name="Christoffels A."/>
            <person name="Clutterbuck D.R."/>
            <person name="Crowe M.L."/>
            <person name="Dalla E."/>
            <person name="Dalrymple B.P."/>
            <person name="de Bono B."/>
            <person name="Della Gatta G."/>
            <person name="di Bernardo D."/>
            <person name="Down T."/>
            <person name="Engstrom P."/>
            <person name="Fagiolini M."/>
            <person name="Faulkner G."/>
            <person name="Fletcher C.F."/>
            <person name="Fukushima T."/>
            <person name="Furuno M."/>
            <person name="Futaki S."/>
            <person name="Gariboldi M."/>
            <person name="Georgii-Hemming P."/>
            <person name="Gingeras T.R."/>
            <person name="Gojobori T."/>
            <person name="Green R.E."/>
            <person name="Gustincich S."/>
            <person name="Harbers M."/>
            <person name="Hayashi Y."/>
            <person name="Hensch T.K."/>
            <person name="Hirokawa N."/>
            <person name="Hill D."/>
            <person name="Huminiecki L."/>
            <person name="Iacono M."/>
            <person name="Ikeo K."/>
            <person name="Iwama A."/>
            <person name="Ishikawa T."/>
            <person name="Jakt M."/>
            <person name="Kanapin A."/>
            <person name="Katoh M."/>
            <person name="Kawasawa Y."/>
            <person name="Kelso J."/>
            <person name="Kitamura H."/>
            <person name="Kitano H."/>
            <person name="Kollias G."/>
            <person name="Krishnan S.P."/>
            <person name="Kruger A."/>
            <person name="Kummerfeld S.K."/>
            <person name="Kurochkin I.V."/>
            <person name="Lareau L.F."/>
            <person name="Lazarevic D."/>
            <person name="Lipovich L."/>
            <person name="Liu J."/>
            <person name="Liuni S."/>
            <person name="McWilliam S."/>
            <person name="Madan Babu M."/>
            <person name="Madera M."/>
            <person name="Marchionni L."/>
            <person name="Matsuda H."/>
            <person name="Matsuzawa S."/>
            <person name="Miki H."/>
            <person name="Mignone F."/>
            <person name="Miyake S."/>
            <person name="Morris K."/>
            <person name="Mottagui-Tabar S."/>
            <person name="Mulder N."/>
            <person name="Nakano N."/>
            <person name="Nakauchi H."/>
            <person name="Ng P."/>
            <person name="Nilsson R."/>
            <person name="Nishiguchi S."/>
            <person name="Nishikawa S."/>
            <person name="Nori F."/>
            <person name="Ohara O."/>
            <person name="Okazaki Y."/>
            <person name="Orlando V."/>
            <person name="Pang K.C."/>
            <person name="Pavan W.J."/>
            <person name="Pavesi G."/>
            <person name="Pesole G."/>
            <person name="Petrovsky N."/>
            <person name="Piazza S."/>
            <person name="Reed J."/>
            <person name="Reid J.F."/>
            <person name="Ring B.Z."/>
            <person name="Ringwald M."/>
            <person name="Rost B."/>
            <person name="Ruan Y."/>
            <person name="Salzberg S.L."/>
            <person name="Sandelin A."/>
            <person name="Schneider C."/>
            <person name="Schoenbach C."/>
            <person name="Sekiguchi K."/>
            <person name="Semple C.A."/>
            <person name="Seno S."/>
            <person name="Sessa L."/>
            <person name="Sheng Y."/>
            <person name="Shibata Y."/>
            <person name="Shimada H."/>
            <person name="Shimada K."/>
            <person name="Silva D."/>
            <person name="Sinclair B."/>
            <person name="Sperling S."/>
            <person name="Stupka E."/>
            <person name="Sugiura K."/>
            <person name="Sultana R."/>
            <person name="Takenaka Y."/>
            <person name="Taki K."/>
            <person name="Tammoja K."/>
            <person name="Tan S.L."/>
            <person name="Tang S."/>
            <person name="Taylor M.S."/>
            <person name="Tegner J."/>
            <person name="Teichmann S.A."/>
            <person name="Ueda H.R."/>
            <person name="van Nimwegen E."/>
            <person name="Verardo R."/>
            <person name="Wei C.L."/>
            <person name="Yagi K."/>
            <person name="Yamanishi H."/>
            <person name="Zabarovsky E."/>
            <person name="Zhu S."/>
            <person name="Zimmer A."/>
            <person name="Hide W."/>
            <person name="Bult C."/>
            <person name="Grimmond S.M."/>
            <person name="Teasdale R.D."/>
            <person name="Liu E.T."/>
            <person name="Brusic V."/>
            <person name="Quackenbush J."/>
            <person name="Wahlestedt C."/>
            <person name="Mattick J.S."/>
            <person name="Hume D.A."/>
            <person name="Kai C."/>
            <person name="Sasaki D."/>
            <person name="Tomaru Y."/>
            <person name="Fukuda S."/>
            <person name="Kanamori-Katayama M."/>
            <person name="Suzuki M."/>
            <person name="Aoki J."/>
            <person name="Arakawa T."/>
            <person name="Iida J."/>
            <person name="Imamura K."/>
            <person name="Itoh M."/>
            <person name="Kato T."/>
            <person name="Kawaji H."/>
            <person name="Kawagashira N."/>
            <person name="Kawashima T."/>
            <person name="Kojima M."/>
            <person name="Kondo S."/>
            <person name="Konno H."/>
            <person name="Nakano K."/>
            <person name="Ninomiya N."/>
            <person name="Nishio T."/>
            <person name="Okada M."/>
            <person name="Plessy C."/>
            <person name="Shibata K."/>
            <person name="Shiraki T."/>
            <person name="Suzuki S."/>
            <person name="Tagami M."/>
            <person name="Waki K."/>
            <person name="Watahiki A."/>
            <person name="Okamura-Oho Y."/>
            <person name="Suzuki H."/>
            <person name="Kawai J."/>
            <person name="Hayashizaki Y."/>
        </authorList>
    </citation>
    <scope>NUCLEOTIDE SEQUENCE [LARGE SCALE MRNA]</scope>
    <source>
        <strain>C57BL/6J</strain>
        <tissue>Heart</tissue>
        <tissue>Kidney</tissue>
    </source>
</reference>
<reference key="2">
    <citation type="journal article" date="2004" name="Genome Res.">
        <title>The status, quality, and expansion of the NIH full-length cDNA project: the Mammalian Gene Collection (MGC).</title>
        <authorList>
            <consortium name="The MGC Project Team"/>
        </authorList>
    </citation>
    <scope>NUCLEOTIDE SEQUENCE [LARGE SCALE MRNA]</scope>
    <source>
        <tissue>Pancreas</tissue>
    </source>
</reference>
<reference key="3">
    <citation type="journal article" date="2007" name="Proc. Natl. Acad. Sci. U.S.A.">
        <title>Large-scale phosphorylation analysis of mouse liver.</title>
        <authorList>
            <person name="Villen J."/>
            <person name="Beausoleil S.A."/>
            <person name="Gerber S.A."/>
            <person name="Gygi S.P."/>
        </authorList>
    </citation>
    <scope>PHOSPHORYLATION [LARGE SCALE ANALYSIS] AT SER-729 AND SER-1015</scope>
    <scope>IDENTIFICATION BY MASS SPECTROMETRY [LARGE SCALE ANALYSIS]</scope>
    <source>
        <tissue>Liver</tissue>
    </source>
</reference>
<reference key="4">
    <citation type="journal article" date="2010" name="Cell">
        <title>A tissue-specific atlas of mouse protein phosphorylation and expression.</title>
        <authorList>
            <person name="Huttlin E.L."/>
            <person name="Jedrychowski M.P."/>
            <person name="Elias J.E."/>
            <person name="Goswami T."/>
            <person name="Rad R."/>
            <person name="Beausoleil S.A."/>
            <person name="Villen J."/>
            <person name="Haas W."/>
            <person name="Sowa M.E."/>
            <person name="Gygi S.P."/>
        </authorList>
    </citation>
    <scope>PHOSPHORYLATION [LARGE SCALE ANALYSIS] AT SER-729 AND SER-1015</scope>
    <scope>IDENTIFICATION BY MASS SPECTROMETRY [LARGE SCALE ANALYSIS]</scope>
    <source>
        <tissue>Brain</tissue>
        <tissue>Brown adipose tissue</tissue>
        <tissue>Heart</tissue>
        <tissue>Kidney</tissue>
        <tissue>Liver</tissue>
        <tissue>Lung</tissue>
        <tissue>Spleen</tissue>
    </source>
</reference>
<feature type="chain" id="PRO_0000057731" description="Phosphorylase b kinase regulatory subunit alpha, liver isoform">
    <location>
        <begin position="1"/>
        <end position="1235"/>
    </location>
</feature>
<feature type="region of interest" description="Disordered" evidence="5">
    <location>
        <begin position="636"/>
        <end position="655"/>
    </location>
</feature>
<feature type="region of interest" description="Calmodulin-binding" evidence="4">
    <location>
        <begin position="807"/>
        <end position="837"/>
    </location>
</feature>
<feature type="region of interest" description="Disordered" evidence="5">
    <location>
        <begin position="1033"/>
        <end position="1060"/>
    </location>
</feature>
<feature type="region of interest" description="Calmodulin-binding" evidence="4">
    <location>
        <begin position="1059"/>
        <end position="1099"/>
    </location>
</feature>
<feature type="compositionally biased region" description="Low complexity" evidence="5">
    <location>
        <begin position="1039"/>
        <end position="1055"/>
    </location>
</feature>
<feature type="modified residue" description="Phosphoserine" evidence="3">
    <location>
        <position position="695"/>
    </location>
</feature>
<feature type="modified residue" description="Phosphoserine" evidence="7 8">
    <location>
        <position position="729"/>
    </location>
</feature>
<feature type="modified residue" description="Phosphoserine" evidence="3">
    <location>
        <position position="735"/>
    </location>
</feature>
<feature type="modified residue" description="Phosphoserine" evidence="3">
    <location>
        <position position="983"/>
    </location>
</feature>
<feature type="modified residue" description="Phosphoserine" evidence="7 8">
    <location>
        <position position="1015"/>
    </location>
</feature>
<feature type="modified residue" description="Phosphoserine" evidence="3">
    <location>
        <position position="1044"/>
    </location>
</feature>
<feature type="lipid moiety-binding region" description="S-farnesyl cysteine" evidence="2">
    <location>
        <position position="1232"/>
    </location>
</feature>
<sequence>MRSRSNSGVRLDGYARLVQQTILCYQNPVTGLLSASHDQKDAWVRDNIYSILAVWGLGMAYRKNADRDEDKAKAYELEQNVVKLMRGLLQCMMRQVDKVEKFKHTQSTKDSLHAKYNTATCSTVVGDDQWGHLQVDATSLFLLFLAQMTASGLRIIFTLDEVAFIQNLVFYIEAAYKVADYGMWERGDKTNQGIPELNASSVGVAKAALEAIDELDLFGAHGGRKSVIHVLPDEVEHCQSILFSMLPRASTSKEIDAGLLSIISFPAFAVEDVNLVNVTKNEIISKLQGRYGCCRFLRDGYKTPREDPHRLHYDPAELKLFENIECEWPVFWTYLIIDGIFNGDAVQVQEYREALEGILIRGKDGIHLVPELYAIPPDKVDEEYKNPHTVDRVPLGKLPHLWGQSLYILSSLLAEGFLATGEIDPLNRRFSTSVKPDVVVQVAVLAENSHIKGLLKEHGMTVQSIADVHPIRVQPGRILSHIYAKLGRNKNMKLSGRPYRHIGVLGTSKLYVIRNHIFTFTPQFTDQHHFYLALDNEMIVEMLRIELAYLCTCWRMTGRPTLTFPVTHTMLTNDGSDIHPAVLSTIRKLEDGYFGGARVKLGNLAEFLTTSFYTHLTFLDPDCDEKLFGDITDRSFSPDSEPDLGGYLEDSSPQESQDELDQYISHLLQSTSLKCYLPPLCKKSEDSHFFSAIHSTRDILSVMAKAKGLETTFFPMILPTKVLSGHRKSLNLVDSPQPLLKTTPEYDYQWPRDDHDEVDCEKLVGQLKDCSNLQDQADILYILYVMKGPRWDTNLFGQHGVTVHSLLSELYGKAGLNQEWSLIRYISGLLRKKVEVLAEACADLLSHQKQLTVGLPPEPREKTISTPLPPEELTELIYEASGQDISIAVLTQEIVVYLAMYVRAQPSLFAEMLRLRIGLIIQVMATELARSLNCSGKEASESLMNLSPFDMKSLLHHILSGKEFGVERSVRPIHSSMSSPAISIHEVGHTGATKTERSGITRLRSEMKQMNRRASADEQFFPLGQTMSNSLHSIKSVRSSTPSSPTGTSSTDSGGQHLGWGEQQGQWLRRRRLDGAINRVPVGFYQKVWKILQKCHGLSIDGYVLPSSTTQEMTPCEIKFAVHVESVLNRVSQPEYRQLLVEAIMVLTLLSDTEMDSIGGIIHVDQIVQLANQLFLQDQVSFGTTDILEKDQATGICHLFYDSAPSGAYGTMTYLTKAVASHLQELLPSSGCQMQ</sequence>